<comment type="function">
    <text evidence="1">Cell division protein that is part of the divisome complex and is recruited early to the Z-ring. Probably stimulates Z-ring formation, perhaps through the cross-linking of FtsZ protofilaments. Its function overlaps with FtsA.</text>
</comment>
<comment type="subunit">
    <text evidence="1">Homodimer. Interacts with FtsZ.</text>
</comment>
<comment type="subcellular location">
    <subcellularLocation>
        <location evidence="1">Cytoplasm</location>
    </subcellularLocation>
    <text evidence="1">Localizes to the division site, in a FtsZ-dependent manner.</text>
</comment>
<comment type="similarity">
    <text evidence="1">Belongs to the SepF family.</text>
</comment>
<evidence type="ECO:0000255" key="1">
    <source>
        <dbReference type="HAMAP-Rule" id="MF_01197"/>
    </source>
</evidence>
<accession>B0K2W6</accession>
<reference key="1">
    <citation type="submission" date="2008-01" db="EMBL/GenBank/DDBJ databases">
        <title>Complete sequence of Thermoanaerobacter sp. X514.</title>
        <authorList>
            <consortium name="US DOE Joint Genome Institute"/>
            <person name="Copeland A."/>
            <person name="Lucas S."/>
            <person name="Lapidus A."/>
            <person name="Barry K."/>
            <person name="Glavina del Rio T."/>
            <person name="Dalin E."/>
            <person name="Tice H."/>
            <person name="Pitluck S."/>
            <person name="Bruce D."/>
            <person name="Goodwin L."/>
            <person name="Saunders E."/>
            <person name="Brettin T."/>
            <person name="Detter J.C."/>
            <person name="Han C."/>
            <person name="Schmutz J."/>
            <person name="Larimer F."/>
            <person name="Land M."/>
            <person name="Hauser L."/>
            <person name="Kyrpides N."/>
            <person name="Kim E."/>
            <person name="Hemme C."/>
            <person name="Fields M.W."/>
            <person name="He Z."/>
            <person name="Zhou J."/>
            <person name="Richardson P."/>
        </authorList>
    </citation>
    <scope>NUCLEOTIDE SEQUENCE [LARGE SCALE GENOMIC DNA]</scope>
    <source>
        <strain>X514</strain>
    </source>
</reference>
<feature type="chain" id="PRO_1000138481" description="Cell division protein SepF">
    <location>
        <begin position="1"/>
        <end position="137"/>
    </location>
</feature>
<dbReference type="EMBL" id="CP000923">
    <property type="protein sequence ID" value="ABY93171.1"/>
    <property type="molecule type" value="Genomic_DNA"/>
</dbReference>
<dbReference type="RefSeq" id="WP_003867666.1">
    <property type="nucleotide sequence ID" value="NC_010320.1"/>
</dbReference>
<dbReference type="SMR" id="B0K2W6"/>
<dbReference type="KEGG" id="tex:Teth514_1891"/>
<dbReference type="HOGENOM" id="CLU_078499_4_0_9"/>
<dbReference type="Proteomes" id="UP000002155">
    <property type="component" value="Chromosome"/>
</dbReference>
<dbReference type="GO" id="GO:0005737">
    <property type="term" value="C:cytoplasm"/>
    <property type="evidence" value="ECO:0007669"/>
    <property type="project" value="UniProtKB-SubCell"/>
</dbReference>
<dbReference type="GO" id="GO:0000917">
    <property type="term" value="P:division septum assembly"/>
    <property type="evidence" value="ECO:0007669"/>
    <property type="project" value="UniProtKB-KW"/>
</dbReference>
<dbReference type="GO" id="GO:0043093">
    <property type="term" value="P:FtsZ-dependent cytokinesis"/>
    <property type="evidence" value="ECO:0007669"/>
    <property type="project" value="UniProtKB-UniRule"/>
</dbReference>
<dbReference type="Gene3D" id="3.30.110.150">
    <property type="entry name" value="SepF-like protein"/>
    <property type="match status" value="1"/>
</dbReference>
<dbReference type="HAMAP" id="MF_01197">
    <property type="entry name" value="SepF"/>
    <property type="match status" value="1"/>
</dbReference>
<dbReference type="InterPro" id="IPR023052">
    <property type="entry name" value="Cell_div_SepF"/>
</dbReference>
<dbReference type="InterPro" id="IPR007561">
    <property type="entry name" value="Cell_div_SepF/SepF-rel"/>
</dbReference>
<dbReference type="InterPro" id="IPR038594">
    <property type="entry name" value="SepF-like_sf"/>
</dbReference>
<dbReference type="PANTHER" id="PTHR35798">
    <property type="entry name" value="CELL DIVISION PROTEIN SEPF"/>
    <property type="match status" value="1"/>
</dbReference>
<dbReference type="PANTHER" id="PTHR35798:SF1">
    <property type="entry name" value="CELL DIVISION PROTEIN SEPF"/>
    <property type="match status" value="1"/>
</dbReference>
<dbReference type="Pfam" id="PF04472">
    <property type="entry name" value="SepF"/>
    <property type="match status" value="1"/>
</dbReference>
<keyword id="KW-0131">Cell cycle</keyword>
<keyword id="KW-0132">Cell division</keyword>
<keyword id="KW-0963">Cytoplasm</keyword>
<keyword id="KW-0717">Septation</keyword>
<proteinExistence type="inferred from homology"/>
<sequence length="137" mass="15687">MSSKMIDKLMSFFGIDEPEEEKEEVDSLQPVIPYDRKPKIVNIHTQPQVKVLILKPEKFEQVMNICNELKNKKPVIVDLQKMDKNEAQRVVDFLSGAAYALNGEIKKISGYIFLVAPENFDITGDIKDEVNSLYNLN</sequence>
<name>SEPF_THEPX</name>
<gene>
    <name evidence="1" type="primary">sepF</name>
    <name type="ordered locus">Teth514_1891</name>
</gene>
<protein>
    <recommendedName>
        <fullName evidence="1">Cell division protein SepF</fullName>
    </recommendedName>
</protein>
<organism>
    <name type="scientific">Thermoanaerobacter sp. (strain X514)</name>
    <dbReference type="NCBI Taxonomy" id="399726"/>
    <lineage>
        <taxon>Bacteria</taxon>
        <taxon>Bacillati</taxon>
        <taxon>Bacillota</taxon>
        <taxon>Clostridia</taxon>
        <taxon>Thermoanaerobacterales</taxon>
        <taxon>Thermoanaerobacteraceae</taxon>
        <taxon>Thermoanaerobacter</taxon>
    </lineage>
</organism>